<organism>
    <name type="scientific">Staphylococcus aureus (strain bovine RF122 / ET3-1)</name>
    <dbReference type="NCBI Taxonomy" id="273036"/>
    <lineage>
        <taxon>Bacteria</taxon>
        <taxon>Bacillati</taxon>
        <taxon>Bacillota</taxon>
        <taxon>Bacilli</taxon>
        <taxon>Bacillales</taxon>
        <taxon>Staphylococcaceae</taxon>
        <taxon>Staphylococcus</taxon>
    </lineage>
</organism>
<name>COPA_STAAB</name>
<evidence type="ECO:0000250" key="1"/>
<evidence type="ECO:0000255" key="2"/>
<evidence type="ECO:0000255" key="3">
    <source>
        <dbReference type="PROSITE-ProRule" id="PRU00280"/>
    </source>
</evidence>
<evidence type="ECO:0000305" key="4"/>
<reference key="1">
    <citation type="journal article" date="2007" name="PLoS ONE">
        <title>Molecular correlates of host specialization in Staphylococcus aureus.</title>
        <authorList>
            <person name="Herron-Olson L."/>
            <person name="Fitzgerald J.R."/>
            <person name="Musser J.M."/>
            <person name="Kapur V."/>
        </authorList>
    </citation>
    <scope>NUCLEOTIDE SEQUENCE [LARGE SCALE GENOMIC DNA]</scope>
    <source>
        <strain>bovine RF122 / ET3-1</strain>
    </source>
</reference>
<feature type="chain" id="PRO_0000350583" description="Copper-exporting P-type ATPase">
    <location>
        <begin position="1"/>
        <end position="802"/>
    </location>
</feature>
<feature type="transmembrane region" description="Helical" evidence="2">
    <location>
        <begin position="161"/>
        <end position="181"/>
    </location>
</feature>
<feature type="transmembrane region" description="Helical" evidence="2">
    <location>
        <begin position="192"/>
        <end position="212"/>
    </location>
</feature>
<feature type="transmembrane region" description="Helical" evidence="2">
    <location>
        <begin position="224"/>
        <end position="244"/>
    </location>
</feature>
<feature type="transmembrane region" description="Helical" evidence="2">
    <location>
        <begin position="256"/>
        <end position="276"/>
    </location>
</feature>
<feature type="transmembrane region" description="Helical" evidence="2">
    <location>
        <begin position="411"/>
        <end position="431"/>
    </location>
</feature>
<feature type="transmembrane region" description="Helical" evidence="2">
    <location>
        <begin position="438"/>
        <end position="458"/>
    </location>
</feature>
<feature type="transmembrane region" description="Helical" evidence="2">
    <location>
        <begin position="748"/>
        <end position="767"/>
    </location>
</feature>
<feature type="transmembrane region" description="Helical" evidence="2">
    <location>
        <begin position="771"/>
        <end position="790"/>
    </location>
</feature>
<feature type="domain" description="HMA 1" evidence="3">
    <location>
        <begin position="5"/>
        <end position="70"/>
    </location>
</feature>
<feature type="domain" description="HMA 2" evidence="3">
    <location>
        <begin position="72"/>
        <end position="138"/>
    </location>
</feature>
<feature type="active site" description="4-aspartylphosphate intermediate" evidence="1">
    <location>
        <position position="495"/>
    </location>
</feature>
<feature type="binding site" evidence="3">
    <location>
        <position position="16"/>
    </location>
    <ligand>
        <name>Cu(+)</name>
        <dbReference type="ChEBI" id="CHEBI:49552"/>
        <label>1</label>
    </ligand>
</feature>
<feature type="binding site" evidence="3">
    <location>
        <position position="19"/>
    </location>
    <ligand>
        <name>Cu(+)</name>
        <dbReference type="ChEBI" id="CHEBI:49552"/>
        <label>1</label>
    </ligand>
</feature>
<feature type="binding site" evidence="3">
    <location>
        <position position="83"/>
    </location>
    <ligand>
        <name>Cu(+)</name>
        <dbReference type="ChEBI" id="CHEBI:49552"/>
        <label>2</label>
    </ligand>
</feature>
<feature type="binding site" evidence="3">
    <location>
        <position position="86"/>
    </location>
    <ligand>
        <name>Cu(+)</name>
        <dbReference type="ChEBI" id="CHEBI:49552"/>
        <label>2</label>
    </ligand>
</feature>
<feature type="binding site">
    <location>
        <position position="690"/>
    </location>
    <ligand>
        <name>Mg(2+)</name>
        <dbReference type="ChEBI" id="CHEBI:18420"/>
    </ligand>
</feature>
<feature type="binding site">
    <location>
        <position position="694"/>
    </location>
    <ligand>
        <name>Mg(2+)</name>
        <dbReference type="ChEBI" id="CHEBI:18420"/>
    </ligand>
</feature>
<accession>Q2YWA3</accession>
<protein>
    <recommendedName>
        <fullName>Copper-exporting P-type ATPase</fullName>
        <ecNumber>7.2.2.8</ecNumber>
    </recommendedName>
    <alternativeName>
        <fullName>Copper-exporting P-type ATPase A</fullName>
    </alternativeName>
    <alternativeName>
        <fullName>Cu(+)-exporting ATPase</fullName>
    </alternativeName>
</protein>
<dbReference type="EC" id="7.2.2.8"/>
<dbReference type="EMBL" id="AJ938182">
    <property type="protein sequence ID" value="CAI82119.1"/>
    <property type="molecule type" value="Genomic_DNA"/>
</dbReference>
<dbReference type="RefSeq" id="WP_000024121.1">
    <property type="nucleotide sequence ID" value="NC_007622.1"/>
</dbReference>
<dbReference type="SMR" id="Q2YWA3"/>
<dbReference type="KEGG" id="sab:SAB2431"/>
<dbReference type="HOGENOM" id="CLU_001771_0_3_9"/>
<dbReference type="GO" id="GO:0005886">
    <property type="term" value="C:plasma membrane"/>
    <property type="evidence" value="ECO:0007669"/>
    <property type="project" value="UniProtKB-SubCell"/>
</dbReference>
<dbReference type="GO" id="GO:0005524">
    <property type="term" value="F:ATP binding"/>
    <property type="evidence" value="ECO:0007669"/>
    <property type="project" value="UniProtKB-KW"/>
</dbReference>
<dbReference type="GO" id="GO:0016887">
    <property type="term" value="F:ATP hydrolysis activity"/>
    <property type="evidence" value="ECO:0007669"/>
    <property type="project" value="InterPro"/>
</dbReference>
<dbReference type="GO" id="GO:0005507">
    <property type="term" value="F:copper ion binding"/>
    <property type="evidence" value="ECO:0007669"/>
    <property type="project" value="InterPro"/>
</dbReference>
<dbReference type="GO" id="GO:0043682">
    <property type="term" value="F:P-type divalent copper transporter activity"/>
    <property type="evidence" value="ECO:0007669"/>
    <property type="project" value="TreeGrafter"/>
</dbReference>
<dbReference type="GO" id="GO:0140581">
    <property type="term" value="F:P-type monovalent copper transporter activity"/>
    <property type="evidence" value="ECO:0007669"/>
    <property type="project" value="UniProtKB-EC"/>
</dbReference>
<dbReference type="GO" id="GO:0055070">
    <property type="term" value="P:copper ion homeostasis"/>
    <property type="evidence" value="ECO:0007669"/>
    <property type="project" value="TreeGrafter"/>
</dbReference>
<dbReference type="CDD" id="cd00371">
    <property type="entry name" value="HMA"/>
    <property type="match status" value="2"/>
</dbReference>
<dbReference type="CDD" id="cd02094">
    <property type="entry name" value="P-type_ATPase_Cu-like"/>
    <property type="match status" value="1"/>
</dbReference>
<dbReference type="FunFam" id="3.40.1110.10:FF:000038">
    <property type="entry name" value="Copper-exporting P-type ATPase"/>
    <property type="match status" value="1"/>
</dbReference>
<dbReference type="FunFam" id="2.70.150.10:FF:000020">
    <property type="entry name" value="Copper-exporting P-type ATPase A"/>
    <property type="match status" value="1"/>
</dbReference>
<dbReference type="FunFam" id="3.30.70.100:FF:000005">
    <property type="entry name" value="Copper-exporting P-type ATPase A"/>
    <property type="match status" value="2"/>
</dbReference>
<dbReference type="FunFam" id="3.40.50.1000:FF:000144">
    <property type="entry name" value="copper-transporting ATPase 1 isoform X2"/>
    <property type="match status" value="1"/>
</dbReference>
<dbReference type="Gene3D" id="3.30.70.100">
    <property type="match status" value="2"/>
</dbReference>
<dbReference type="Gene3D" id="3.40.1110.10">
    <property type="entry name" value="Calcium-transporting ATPase, cytoplasmic domain N"/>
    <property type="match status" value="2"/>
</dbReference>
<dbReference type="Gene3D" id="2.70.150.10">
    <property type="entry name" value="Calcium-transporting ATPase, cytoplasmic transduction domain A"/>
    <property type="match status" value="1"/>
</dbReference>
<dbReference type="Gene3D" id="3.40.50.1000">
    <property type="entry name" value="HAD superfamily/HAD-like"/>
    <property type="match status" value="1"/>
</dbReference>
<dbReference type="InterPro" id="IPR023299">
    <property type="entry name" value="ATPase_P-typ_cyto_dom_N"/>
</dbReference>
<dbReference type="InterPro" id="IPR018303">
    <property type="entry name" value="ATPase_P-typ_P_site"/>
</dbReference>
<dbReference type="InterPro" id="IPR023298">
    <property type="entry name" value="ATPase_P-typ_TM_dom_sf"/>
</dbReference>
<dbReference type="InterPro" id="IPR008250">
    <property type="entry name" value="ATPase_P-typ_transduc_dom_A_sf"/>
</dbReference>
<dbReference type="InterPro" id="IPR036412">
    <property type="entry name" value="HAD-like_sf"/>
</dbReference>
<dbReference type="InterPro" id="IPR023214">
    <property type="entry name" value="HAD_sf"/>
</dbReference>
<dbReference type="InterPro" id="IPR017969">
    <property type="entry name" value="Heavy-metal-associated_CS"/>
</dbReference>
<dbReference type="InterPro" id="IPR006122">
    <property type="entry name" value="HMA_Cu_ion-bd"/>
</dbReference>
<dbReference type="InterPro" id="IPR006121">
    <property type="entry name" value="HMA_dom"/>
</dbReference>
<dbReference type="InterPro" id="IPR036163">
    <property type="entry name" value="HMA_dom_sf"/>
</dbReference>
<dbReference type="InterPro" id="IPR027256">
    <property type="entry name" value="P-typ_ATPase_IB"/>
</dbReference>
<dbReference type="InterPro" id="IPR001757">
    <property type="entry name" value="P_typ_ATPase"/>
</dbReference>
<dbReference type="InterPro" id="IPR044492">
    <property type="entry name" value="P_typ_ATPase_HD_dom"/>
</dbReference>
<dbReference type="NCBIfam" id="TIGR01511">
    <property type="entry name" value="ATPase-IB1_Cu"/>
    <property type="match status" value="1"/>
</dbReference>
<dbReference type="NCBIfam" id="TIGR01525">
    <property type="entry name" value="ATPase-IB_hvy"/>
    <property type="match status" value="1"/>
</dbReference>
<dbReference type="NCBIfam" id="TIGR01494">
    <property type="entry name" value="ATPase_P-type"/>
    <property type="match status" value="1"/>
</dbReference>
<dbReference type="NCBIfam" id="TIGR00003">
    <property type="entry name" value="copper ion binding protein"/>
    <property type="match status" value="2"/>
</dbReference>
<dbReference type="PANTHER" id="PTHR43520">
    <property type="entry name" value="ATP7, ISOFORM B"/>
    <property type="match status" value="1"/>
</dbReference>
<dbReference type="PANTHER" id="PTHR43520:SF8">
    <property type="entry name" value="P-TYPE CU(+) TRANSPORTER"/>
    <property type="match status" value="1"/>
</dbReference>
<dbReference type="Pfam" id="PF00122">
    <property type="entry name" value="E1-E2_ATPase"/>
    <property type="match status" value="1"/>
</dbReference>
<dbReference type="Pfam" id="PF00403">
    <property type="entry name" value="HMA"/>
    <property type="match status" value="2"/>
</dbReference>
<dbReference type="Pfam" id="PF00702">
    <property type="entry name" value="Hydrolase"/>
    <property type="match status" value="1"/>
</dbReference>
<dbReference type="PRINTS" id="PR00119">
    <property type="entry name" value="CATATPASE"/>
</dbReference>
<dbReference type="PRINTS" id="PR00943">
    <property type="entry name" value="CUATPASE"/>
</dbReference>
<dbReference type="SFLD" id="SFLDS00003">
    <property type="entry name" value="Haloacid_Dehalogenase"/>
    <property type="match status" value="1"/>
</dbReference>
<dbReference type="SFLD" id="SFLDF00027">
    <property type="entry name" value="p-type_atpase"/>
    <property type="match status" value="1"/>
</dbReference>
<dbReference type="SUPFAM" id="SSF81653">
    <property type="entry name" value="Calcium ATPase, transduction domain A"/>
    <property type="match status" value="1"/>
</dbReference>
<dbReference type="SUPFAM" id="SSF81665">
    <property type="entry name" value="Calcium ATPase, transmembrane domain M"/>
    <property type="match status" value="1"/>
</dbReference>
<dbReference type="SUPFAM" id="SSF56784">
    <property type="entry name" value="HAD-like"/>
    <property type="match status" value="1"/>
</dbReference>
<dbReference type="SUPFAM" id="SSF55008">
    <property type="entry name" value="HMA, heavy metal-associated domain"/>
    <property type="match status" value="2"/>
</dbReference>
<dbReference type="PROSITE" id="PS00154">
    <property type="entry name" value="ATPASE_E1_E2"/>
    <property type="match status" value="1"/>
</dbReference>
<dbReference type="PROSITE" id="PS01047">
    <property type="entry name" value="HMA_1"/>
    <property type="match status" value="2"/>
</dbReference>
<dbReference type="PROSITE" id="PS50846">
    <property type="entry name" value="HMA_2"/>
    <property type="match status" value="2"/>
</dbReference>
<proteinExistence type="inferred from homology"/>
<sequence>MANTKKTTLDITGMTCAACSNRIEKKLNKLDDVNAQVNLTTEKATVEYNPDQHDVQEFINTIQHLGYGVAVETVELDITGMTCAACSSRIEKVLNKMDGVQNATVNLTTEQAKVDYYPEETDADKLVTRIQKLGYDASIKDNNKDQTSRKAEALQHKLIKLIISAVLSLPLLMLMFVHLFNMHIPALFTNPWFQFILATPVQFIIGWQFYVGAYKNLRNGGANMDVLVAVGTSAAYFYSIYEMIRWLNGSTTQPHLYFETSAVLITLILFGKYLEARAKSQTTNALGELLSLQAKEARILKDGNELMIPLNEVHVGDTLIVKPGEKIPVDGKIIKGMTAIDESMLTGESIPVEKNVDDTVIGSTMNKNGTITMTATKVGGDTALANIIKVVEEAQSSKAPIQRLADIISGYFVPIVVGIALLTFIVWITLVTPGTFEPALVASISVLVIACPCALGLATPTSIMVGTGRAAENGILFKGGEFVERTHQIDTIVLDKTGTITNGRPVVTDYHGDDQTLQLLATAEKDSEHPLAEAIVNYAKEKQLTLTETTTFKAVPGHGIEATIDHHHILVGNRKLMADNDISLPKHISDDLTHYERDGKTAMLIAVNYSLTGIIAVADTLKNHAKDAIKQLHDMGIEVAMLTGDNKNTAQAIAKQVGIDTVIADILPEEKAAQIAKLQQQGKKVAMVGDGVNDAPALVKADIGIAIGTGTEVAIEAAGITILGGDLMLIPKAIYASKATIRNIRQNLFWAFGYNIAGIPIAALGLLAPWVAGAAMALSSVSVVTNALRLKKMRLEPRRKDA</sequence>
<keyword id="KW-0067">ATP-binding</keyword>
<keyword id="KW-1003">Cell membrane</keyword>
<keyword id="KW-0186">Copper</keyword>
<keyword id="KW-0187">Copper transport</keyword>
<keyword id="KW-0406">Ion transport</keyword>
<keyword id="KW-0460">Magnesium</keyword>
<keyword id="KW-0472">Membrane</keyword>
<keyword id="KW-0479">Metal-binding</keyword>
<keyword id="KW-0547">Nucleotide-binding</keyword>
<keyword id="KW-0597">Phosphoprotein</keyword>
<keyword id="KW-0677">Repeat</keyword>
<keyword id="KW-1278">Translocase</keyword>
<keyword id="KW-0812">Transmembrane</keyword>
<keyword id="KW-1133">Transmembrane helix</keyword>
<keyword id="KW-0813">Transport</keyword>
<gene>
    <name type="primary">copA</name>
    <name type="ordered locus">SAB2431</name>
</gene>
<comment type="function">
    <text evidence="1">Involved in copper export.</text>
</comment>
<comment type="catalytic activity">
    <reaction>
        <text>Cu(+)(in) + ATP + H2O = Cu(+)(out) + ADP + phosphate + H(+)</text>
        <dbReference type="Rhea" id="RHEA:25792"/>
        <dbReference type="ChEBI" id="CHEBI:15377"/>
        <dbReference type="ChEBI" id="CHEBI:15378"/>
        <dbReference type="ChEBI" id="CHEBI:30616"/>
        <dbReference type="ChEBI" id="CHEBI:43474"/>
        <dbReference type="ChEBI" id="CHEBI:49552"/>
        <dbReference type="ChEBI" id="CHEBI:456216"/>
        <dbReference type="EC" id="7.2.2.8"/>
    </reaction>
</comment>
<comment type="subcellular location">
    <subcellularLocation>
        <location evidence="1">Cell membrane</location>
        <topology evidence="1">Multi-pass membrane protein</topology>
    </subcellularLocation>
</comment>
<comment type="similarity">
    <text evidence="4">Belongs to the cation transport ATPase (P-type) (TC 3.A.3) family. Type IB subfamily.</text>
</comment>